<protein>
    <recommendedName>
        <fullName evidence="1">Photosystem II reaction center protein T</fullName>
        <shortName evidence="1">PSII-T</shortName>
    </recommendedName>
</protein>
<name>PSBT_SOLLC</name>
<dbReference type="EMBL" id="DQ347959">
    <property type="protein sequence ID" value="ABC56326.1"/>
    <property type="molecule type" value="Genomic_DNA"/>
</dbReference>
<dbReference type="EMBL" id="AM087200">
    <property type="protein sequence ID" value="CAJ32421.1"/>
    <property type="molecule type" value="Genomic_DNA"/>
</dbReference>
<dbReference type="RefSeq" id="AP_004955.1">
    <property type="nucleotide sequence ID" value="AC_000188.1"/>
</dbReference>
<dbReference type="RefSeq" id="YP_008563115.1">
    <property type="nucleotide sequence ID" value="NC_007898.3"/>
</dbReference>
<dbReference type="SMR" id="Q2MI74"/>
<dbReference type="FunCoup" id="Q2MI74">
    <property type="interactions" value="43"/>
</dbReference>
<dbReference type="STRING" id="4081.Q2MI74"/>
<dbReference type="GeneID" id="3950459"/>
<dbReference type="KEGG" id="sly:3950459"/>
<dbReference type="InParanoid" id="Q2MI74"/>
<dbReference type="OrthoDB" id="1558483at2759"/>
<dbReference type="Proteomes" id="UP000004994">
    <property type="component" value="Chloroplast"/>
</dbReference>
<dbReference type="GO" id="GO:0009535">
    <property type="term" value="C:chloroplast thylakoid membrane"/>
    <property type="evidence" value="ECO:0007669"/>
    <property type="project" value="UniProtKB-SubCell"/>
</dbReference>
<dbReference type="GO" id="GO:0009539">
    <property type="term" value="C:photosystem II reaction center"/>
    <property type="evidence" value="ECO:0007669"/>
    <property type="project" value="InterPro"/>
</dbReference>
<dbReference type="GO" id="GO:0015979">
    <property type="term" value="P:photosynthesis"/>
    <property type="evidence" value="ECO:0007669"/>
    <property type="project" value="UniProtKB-UniRule"/>
</dbReference>
<dbReference type="HAMAP" id="MF_00808">
    <property type="entry name" value="PSII_PsbT"/>
    <property type="match status" value="1"/>
</dbReference>
<dbReference type="InterPro" id="IPR001743">
    <property type="entry name" value="PSII_PsbT"/>
</dbReference>
<dbReference type="InterPro" id="IPR037268">
    <property type="entry name" value="PSII_PsbT_sf"/>
</dbReference>
<dbReference type="PANTHER" id="PTHR36411">
    <property type="match status" value="1"/>
</dbReference>
<dbReference type="PANTHER" id="PTHR36411:SF2">
    <property type="entry name" value="PHOTOSYSTEM II REACTION CENTER PROTEIN T"/>
    <property type="match status" value="1"/>
</dbReference>
<dbReference type="Pfam" id="PF01405">
    <property type="entry name" value="PsbT"/>
    <property type="match status" value="1"/>
</dbReference>
<dbReference type="SUPFAM" id="SSF161029">
    <property type="entry name" value="Photosystem II reaction center protein T, PsbT"/>
    <property type="match status" value="1"/>
</dbReference>
<keyword id="KW-0150">Chloroplast</keyword>
<keyword id="KW-0472">Membrane</keyword>
<keyword id="KW-0602">Photosynthesis</keyword>
<keyword id="KW-0604">Photosystem II</keyword>
<keyword id="KW-0934">Plastid</keyword>
<keyword id="KW-1185">Reference proteome</keyword>
<keyword id="KW-0793">Thylakoid</keyword>
<keyword id="KW-0812">Transmembrane</keyword>
<keyword id="KW-1133">Transmembrane helix</keyword>
<geneLocation type="chloroplast"/>
<evidence type="ECO:0000255" key="1">
    <source>
        <dbReference type="HAMAP-Rule" id="MF_00808"/>
    </source>
</evidence>
<comment type="function">
    <text evidence="1">Found at the monomer-monomer interface of the photosystem II (PS II) dimer, plays a role in assembly and dimerization of PSII. PSII is a light-driven water plastoquinone oxidoreductase, using light energy to abstract electrons from H(2)O, generating a proton gradient subsequently used for ATP formation.</text>
</comment>
<comment type="subunit">
    <text evidence="1">PSII is composed of 1 copy each of membrane proteins PsbA, PsbB, PsbC, PsbD, PsbE, PsbF, PsbH, PsbI, PsbJ, PsbK, PsbL, PsbM, PsbT, PsbY, PsbZ, Psb30/Ycf12, at least 3 peripheral proteins of the oxygen-evolving complex and a large number of cofactors. It forms dimeric complexes.</text>
</comment>
<comment type="subcellular location">
    <subcellularLocation>
        <location evidence="1">Plastid</location>
        <location evidence="1">Chloroplast thylakoid membrane</location>
        <topology evidence="1">Single-pass membrane protein</topology>
    </subcellularLocation>
</comment>
<comment type="similarity">
    <text evidence="1">Belongs to the PsbT family.</text>
</comment>
<reference key="1">
    <citation type="journal article" date="2006" name="Theor. Appl. Genet.">
        <title>Complete chloroplast genome sequences of Solanum bulbocastanum, Solanum lycopersicum and comparative analyses with other Solanaceae genomes.</title>
        <authorList>
            <person name="Daniell H."/>
            <person name="Lee S.-B."/>
            <person name="Grevich J."/>
            <person name="Saski C."/>
            <person name="Quesada-Vargas T."/>
            <person name="Guda C."/>
            <person name="Tomkins J."/>
            <person name="Jansen R.K."/>
        </authorList>
    </citation>
    <scope>NUCLEOTIDE SEQUENCE [LARGE SCALE GENOMIC DNA]</scope>
    <source>
        <strain>cv. LA3023</strain>
    </source>
</reference>
<reference key="2">
    <citation type="journal article" date="2006" name="J. Mol. Evol.">
        <title>Sequence of the tomato chloroplast DNA and evolutionary comparison of solanaceous plastid genomes.</title>
        <authorList>
            <person name="Kahlau S."/>
            <person name="Aspinall S."/>
            <person name="Gray J.C."/>
            <person name="Bock R."/>
        </authorList>
    </citation>
    <scope>NUCLEOTIDE SEQUENCE [LARGE SCALE GENOMIC DNA]</scope>
    <source>
        <strain>cv. IPA-6</strain>
    </source>
</reference>
<feature type="chain" id="PRO_0000276313" description="Photosystem II reaction center protein T">
    <location>
        <begin position="1"/>
        <end position="34"/>
    </location>
</feature>
<feature type="transmembrane region" description="Helical" evidence="1">
    <location>
        <begin position="3"/>
        <end position="23"/>
    </location>
</feature>
<accession>Q2MI74</accession>
<gene>
    <name evidence="1" type="primary">psbT</name>
</gene>
<sequence length="34" mass="3978">MEALVYTFLLVSTLGIIFFAIFFREPPTIRTKKN</sequence>
<organism>
    <name type="scientific">Solanum lycopersicum</name>
    <name type="common">Tomato</name>
    <name type="synonym">Lycopersicon esculentum</name>
    <dbReference type="NCBI Taxonomy" id="4081"/>
    <lineage>
        <taxon>Eukaryota</taxon>
        <taxon>Viridiplantae</taxon>
        <taxon>Streptophyta</taxon>
        <taxon>Embryophyta</taxon>
        <taxon>Tracheophyta</taxon>
        <taxon>Spermatophyta</taxon>
        <taxon>Magnoliopsida</taxon>
        <taxon>eudicotyledons</taxon>
        <taxon>Gunneridae</taxon>
        <taxon>Pentapetalae</taxon>
        <taxon>asterids</taxon>
        <taxon>lamiids</taxon>
        <taxon>Solanales</taxon>
        <taxon>Solanaceae</taxon>
        <taxon>Solanoideae</taxon>
        <taxon>Solaneae</taxon>
        <taxon>Solanum</taxon>
        <taxon>Solanum subgen. Lycopersicon</taxon>
    </lineage>
</organism>
<proteinExistence type="inferred from homology"/>